<sequence length="408" mass="45785">MKNQLIDRLTRYTTIDTQSDPKSTTTPSTEKQWDLLHLLEKELQQLGLPTDLDENGYLFATLESNIDADVPTVGFLAHVDTSPDFNASNVKPQIIENYDGKPYKLGNTKRVLDPKVFPELNSLVGHTLMVTDGTSLLGADDKAGIVEIMEAICYLQEHPEIKHGTIRIGFTPDEEIGRGPHKFDVDRFNADFAYTMDGSQYGELQYESFNAAEAVITCHGVNVHPGSAKNAMVNAIRLGEQFDSLLPDSEVPERTEGYEGFYHLMNFEGTVEKATLQYIIRDHDKKQFELRKKRILEIRDDINAHFENYPVKVDISDQYFNMAEKILPLPHIIDIPKRVFAKLDIPANTEPIRGGTDGSQLSFMGLPTPNIFTGCGNFHGPYEYASIDVMEKAVQVIIGIVEDTAENN</sequence>
<keyword id="KW-0031">Aminopeptidase</keyword>
<keyword id="KW-0963">Cytoplasm</keyword>
<keyword id="KW-0378">Hydrolase</keyword>
<keyword id="KW-0479">Metal-binding</keyword>
<keyword id="KW-0482">Metalloprotease</keyword>
<keyword id="KW-0645">Protease</keyword>
<keyword id="KW-0862">Zinc</keyword>
<accession>Q6GIP8</accession>
<reference key="1">
    <citation type="journal article" date="2004" name="Proc. Natl. Acad. Sci. U.S.A.">
        <title>Complete genomes of two clinical Staphylococcus aureus strains: evidence for the rapid evolution of virulence and drug resistance.</title>
        <authorList>
            <person name="Holden M.T.G."/>
            <person name="Feil E.J."/>
            <person name="Lindsay J.A."/>
            <person name="Peacock S.J."/>
            <person name="Day N.P.J."/>
            <person name="Enright M.C."/>
            <person name="Foster T.J."/>
            <person name="Moore C.E."/>
            <person name="Hurst L."/>
            <person name="Atkin R."/>
            <person name="Barron A."/>
            <person name="Bason N."/>
            <person name="Bentley S.D."/>
            <person name="Chillingworth C."/>
            <person name="Chillingworth T."/>
            <person name="Churcher C."/>
            <person name="Clark L."/>
            <person name="Corton C."/>
            <person name="Cronin A."/>
            <person name="Doggett J."/>
            <person name="Dowd L."/>
            <person name="Feltwell T."/>
            <person name="Hance Z."/>
            <person name="Harris B."/>
            <person name="Hauser H."/>
            <person name="Holroyd S."/>
            <person name="Jagels K."/>
            <person name="James K.D."/>
            <person name="Lennard N."/>
            <person name="Line A."/>
            <person name="Mayes R."/>
            <person name="Moule S."/>
            <person name="Mungall K."/>
            <person name="Ormond D."/>
            <person name="Quail M.A."/>
            <person name="Rabbinowitsch E."/>
            <person name="Rutherford K.M."/>
            <person name="Sanders M."/>
            <person name="Sharp S."/>
            <person name="Simmonds M."/>
            <person name="Stevens K."/>
            <person name="Whitehead S."/>
            <person name="Barrell B.G."/>
            <person name="Spratt B.G."/>
            <person name="Parkhill J."/>
        </authorList>
    </citation>
    <scope>NUCLEOTIDE SEQUENCE [LARGE SCALE GENOMIC DNA]</scope>
    <source>
        <strain>MRSA252</strain>
    </source>
</reference>
<feature type="chain" id="PRO_0000185314" description="Peptidase T">
    <location>
        <begin position="1"/>
        <end position="408"/>
    </location>
</feature>
<feature type="active site" evidence="1">
    <location>
        <position position="80"/>
    </location>
</feature>
<feature type="active site" description="Proton acceptor" evidence="1">
    <location>
        <position position="174"/>
    </location>
</feature>
<feature type="binding site" evidence="1">
    <location>
        <position position="78"/>
    </location>
    <ligand>
        <name>Zn(2+)</name>
        <dbReference type="ChEBI" id="CHEBI:29105"/>
        <label>1</label>
    </ligand>
</feature>
<feature type="binding site" evidence="1">
    <location>
        <position position="140"/>
    </location>
    <ligand>
        <name>Zn(2+)</name>
        <dbReference type="ChEBI" id="CHEBI:29105"/>
        <label>1</label>
    </ligand>
</feature>
<feature type="binding site" evidence="1">
    <location>
        <position position="140"/>
    </location>
    <ligand>
        <name>Zn(2+)</name>
        <dbReference type="ChEBI" id="CHEBI:29105"/>
        <label>2</label>
    </ligand>
</feature>
<feature type="binding site" evidence="1">
    <location>
        <position position="175"/>
    </location>
    <ligand>
        <name>Zn(2+)</name>
        <dbReference type="ChEBI" id="CHEBI:29105"/>
        <label>2</label>
    </ligand>
</feature>
<feature type="binding site" evidence="1">
    <location>
        <position position="197"/>
    </location>
    <ligand>
        <name>Zn(2+)</name>
        <dbReference type="ChEBI" id="CHEBI:29105"/>
        <label>1</label>
    </ligand>
</feature>
<feature type="binding site" evidence="1">
    <location>
        <position position="379"/>
    </location>
    <ligand>
        <name>Zn(2+)</name>
        <dbReference type="ChEBI" id="CHEBI:29105"/>
        <label>2</label>
    </ligand>
</feature>
<gene>
    <name evidence="1" type="primary">pepT</name>
    <name type="ordered locus">SAR0797</name>
</gene>
<comment type="function">
    <text evidence="1">Cleaves the N-terminal amino acid of tripeptides.</text>
</comment>
<comment type="catalytic activity">
    <reaction evidence="1">
        <text>Release of the N-terminal residue from a tripeptide.</text>
        <dbReference type="EC" id="3.4.11.4"/>
    </reaction>
</comment>
<comment type="cofactor">
    <cofactor evidence="1">
        <name>Zn(2+)</name>
        <dbReference type="ChEBI" id="CHEBI:29105"/>
    </cofactor>
    <text evidence="1">Binds 2 Zn(2+) ions per subunit.</text>
</comment>
<comment type="subcellular location">
    <subcellularLocation>
        <location evidence="1">Cytoplasm</location>
    </subcellularLocation>
</comment>
<comment type="similarity">
    <text evidence="1">Belongs to the peptidase M20B family.</text>
</comment>
<evidence type="ECO:0000255" key="1">
    <source>
        <dbReference type="HAMAP-Rule" id="MF_00550"/>
    </source>
</evidence>
<protein>
    <recommendedName>
        <fullName evidence="1">Peptidase T</fullName>
        <ecNumber evidence="1">3.4.11.4</ecNumber>
    </recommendedName>
    <alternativeName>
        <fullName evidence="1">Aminotripeptidase</fullName>
        <shortName evidence="1">Tripeptidase</shortName>
    </alternativeName>
    <alternativeName>
        <fullName evidence="1">Tripeptide aminopeptidase</fullName>
    </alternativeName>
</protein>
<dbReference type="EC" id="3.4.11.4" evidence="1"/>
<dbReference type="EMBL" id="BX571856">
    <property type="protein sequence ID" value="CAG39807.1"/>
    <property type="molecule type" value="Genomic_DNA"/>
</dbReference>
<dbReference type="RefSeq" id="WP_000795813.1">
    <property type="nucleotide sequence ID" value="NC_002952.2"/>
</dbReference>
<dbReference type="SMR" id="Q6GIP8"/>
<dbReference type="MEROPS" id="M20.003"/>
<dbReference type="KEGG" id="sar:SAR0797"/>
<dbReference type="HOGENOM" id="CLU_053676_0_0_9"/>
<dbReference type="Proteomes" id="UP000000596">
    <property type="component" value="Chromosome"/>
</dbReference>
<dbReference type="GO" id="GO:0005829">
    <property type="term" value="C:cytosol"/>
    <property type="evidence" value="ECO:0007669"/>
    <property type="project" value="TreeGrafter"/>
</dbReference>
<dbReference type="GO" id="GO:0008237">
    <property type="term" value="F:metallopeptidase activity"/>
    <property type="evidence" value="ECO:0007669"/>
    <property type="project" value="UniProtKB-KW"/>
</dbReference>
<dbReference type="GO" id="GO:0045148">
    <property type="term" value="F:tripeptide aminopeptidase activity"/>
    <property type="evidence" value="ECO:0007669"/>
    <property type="project" value="UniProtKB-UniRule"/>
</dbReference>
<dbReference type="GO" id="GO:0008270">
    <property type="term" value="F:zinc ion binding"/>
    <property type="evidence" value="ECO:0007669"/>
    <property type="project" value="UniProtKB-UniRule"/>
</dbReference>
<dbReference type="GO" id="GO:0043171">
    <property type="term" value="P:peptide catabolic process"/>
    <property type="evidence" value="ECO:0007669"/>
    <property type="project" value="UniProtKB-UniRule"/>
</dbReference>
<dbReference type="GO" id="GO:0006508">
    <property type="term" value="P:proteolysis"/>
    <property type="evidence" value="ECO:0007669"/>
    <property type="project" value="UniProtKB-UniRule"/>
</dbReference>
<dbReference type="CDD" id="cd03892">
    <property type="entry name" value="M20_peptT"/>
    <property type="match status" value="1"/>
</dbReference>
<dbReference type="FunFam" id="3.30.70.360:FF:000002">
    <property type="entry name" value="Peptidase T"/>
    <property type="match status" value="1"/>
</dbReference>
<dbReference type="Gene3D" id="3.30.70.360">
    <property type="match status" value="1"/>
</dbReference>
<dbReference type="Gene3D" id="3.40.630.10">
    <property type="entry name" value="Zn peptidases"/>
    <property type="match status" value="1"/>
</dbReference>
<dbReference type="HAMAP" id="MF_00550">
    <property type="entry name" value="Aminopeptidase_M20"/>
    <property type="match status" value="1"/>
</dbReference>
<dbReference type="InterPro" id="IPR001261">
    <property type="entry name" value="ArgE/DapE_CS"/>
</dbReference>
<dbReference type="InterPro" id="IPR036264">
    <property type="entry name" value="Bact_exopeptidase_dim_dom"/>
</dbReference>
<dbReference type="InterPro" id="IPR002933">
    <property type="entry name" value="Peptidase_M20"/>
</dbReference>
<dbReference type="InterPro" id="IPR011650">
    <property type="entry name" value="Peptidase_M20_dimer"/>
</dbReference>
<dbReference type="InterPro" id="IPR010161">
    <property type="entry name" value="Peptidase_M20B"/>
</dbReference>
<dbReference type="NCBIfam" id="TIGR01882">
    <property type="entry name" value="peptidase-T"/>
    <property type="match status" value="1"/>
</dbReference>
<dbReference type="NCBIfam" id="NF003976">
    <property type="entry name" value="PRK05469.1"/>
    <property type="match status" value="1"/>
</dbReference>
<dbReference type="NCBIfam" id="NF009920">
    <property type="entry name" value="PRK13381.1"/>
    <property type="match status" value="1"/>
</dbReference>
<dbReference type="PANTHER" id="PTHR42994">
    <property type="entry name" value="PEPTIDASE T"/>
    <property type="match status" value="1"/>
</dbReference>
<dbReference type="PANTHER" id="PTHR42994:SF1">
    <property type="entry name" value="PEPTIDASE T"/>
    <property type="match status" value="1"/>
</dbReference>
<dbReference type="Pfam" id="PF07687">
    <property type="entry name" value="M20_dimer"/>
    <property type="match status" value="1"/>
</dbReference>
<dbReference type="Pfam" id="PF01546">
    <property type="entry name" value="Peptidase_M20"/>
    <property type="match status" value="1"/>
</dbReference>
<dbReference type="PIRSF" id="PIRSF037215">
    <property type="entry name" value="Peptidase_M20B"/>
    <property type="match status" value="1"/>
</dbReference>
<dbReference type="SUPFAM" id="SSF55031">
    <property type="entry name" value="Bacterial exopeptidase dimerisation domain"/>
    <property type="match status" value="1"/>
</dbReference>
<dbReference type="SUPFAM" id="SSF53187">
    <property type="entry name" value="Zn-dependent exopeptidases"/>
    <property type="match status" value="1"/>
</dbReference>
<dbReference type="PROSITE" id="PS00758">
    <property type="entry name" value="ARGE_DAPE_CPG2_1"/>
    <property type="match status" value="1"/>
</dbReference>
<dbReference type="PROSITE" id="PS00759">
    <property type="entry name" value="ARGE_DAPE_CPG2_2"/>
    <property type="match status" value="1"/>
</dbReference>
<proteinExistence type="inferred from homology"/>
<name>PEPT_STAAR</name>
<organism>
    <name type="scientific">Staphylococcus aureus (strain MRSA252)</name>
    <dbReference type="NCBI Taxonomy" id="282458"/>
    <lineage>
        <taxon>Bacteria</taxon>
        <taxon>Bacillati</taxon>
        <taxon>Bacillota</taxon>
        <taxon>Bacilli</taxon>
        <taxon>Bacillales</taxon>
        <taxon>Staphylococcaceae</taxon>
        <taxon>Staphylococcus</taxon>
    </lineage>
</organism>